<accession>P98171</accession>
<accession>Q14144</accession>
<accession>Q86UY3</accession>
<sequence length="946" mass="105026">MAAHGKLRRERGLQAEYETQVKEMRWQLSEQLRCLELQGELRRELLQELAEFMRRRAEVELEYSRGLEKLAERFSSRGGRLGSSREHQSFRKEPSLLSPLHCWAVLLQHTRQQSRESAALSEVLAGPLAQRLSHIAEDVGRLVKKSRDLEQQLQDELLEVVSELQTAKKTYQAYHMESVNAEAKLREAERQEEKRAGRSVPTTTAGATEAGPLRKSSLKKGGRLVEKRQAKFMEHKLKCTKARNEYLLSLASVNAAVSNYYLHDVLDLMDCCDTGFHLALGQVLRSYTAAESRTQASQVQGLGSLEEAVEALDPPGDKAKVLEVHATVFCPPLRFDYHPHDGDEVAEICVEMELRDEILPRAQNIQSRLDRQTIETEEVNKTLKATLQALLEVVASDDGDVLDSFQTSPSTESLKSTSSDPGSRQAGRRRGQQQETETFYLTKLQEYLSGRSILAKLQAKHEKLQEALQRGDKEEQEVSWTQYTQRKFQKSRQPRPSSQYNQRLFGGDMEKFIQSSGQPVPLVVESCIRFINLNGLQHEGIFRVSGAQLRVSEIRDAFERGEDPLVEGCTAHDLDSVAGVLKLYFRSLEPPLFPPDLFGELLASSELEATAERVEHVSRLLWRLPAPVLVVLRYLFTFLNHLAQYSDENMMDPYNLAVCFGPTLLPVPAGQDPVALQGRVNQLVQTLIVQPDRVFPPLTSLPGPVYEKCMAPPSASCLGDAQLESLGADNEPELEAEMPAQEDDLEGVVEAVACFAYTGRTAQELSFRRGDVLRLHERASSDWWRGEHNGMRGLIPHKYITLPAGTEKQVVGAGLQTAGESGSSPEGLLASELVHRPEPCTSPEAMGPSGHRRRCLVPASPEQHVEVDKAVAQNMDSVFKELLGKTSVRQGLGPASTTSPSPGPRSPKAPPSSRLGRNKGFSRGPGAPASPSASHPQGLDTTPKPH</sequence>
<name>RHG04_HUMAN</name>
<evidence type="ECO:0000255" key="1"/>
<evidence type="ECO:0000255" key="2">
    <source>
        <dbReference type="PROSITE-ProRule" id="PRU00172"/>
    </source>
</evidence>
<evidence type="ECO:0000255" key="3">
    <source>
        <dbReference type="PROSITE-ProRule" id="PRU00192"/>
    </source>
</evidence>
<evidence type="ECO:0000255" key="4">
    <source>
        <dbReference type="PROSITE-ProRule" id="PRU01077"/>
    </source>
</evidence>
<evidence type="ECO:0000256" key="5">
    <source>
        <dbReference type="SAM" id="MobiDB-lite"/>
    </source>
</evidence>
<evidence type="ECO:0000269" key="6">
    <source>
    </source>
</evidence>
<evidence type="ECO:0000303" key="7">
    <source>
    </source>
</evidence>
<evidence type="ECO:0000305" key="8"/>
<evidence type="ECO:0000312" key="9">
    <source>
        <dbReference type="HGNC" id="HGNC:674"/>
    </source>
</evidence>
<evidence type="ECO:0007744" key="10">
    <source>
    </source>
</evidence>
<evidence type="ECO:0007829" key="11">
    <source>
        <dbReference type="PDB" id="2EPD"/>
    </source>
</evidence>
<proteinExistence type="evidence at protein level"/>
<gene>
    <name evidence="9" type="primary">ARHGAP4</name>
    <name type="synonym">KIAA0131</name>
    <name type="synonym">RGC1</name>
    <name type="synonym">RHOGAP4</name>
</gene>
<keyword id="KW-0002">3D-structure</keyword>
<keyword id="KW-0025">Alternative splicing</keyword>
<keyword id="KW-0175">Coiled coil</keyword>
<keyword id="KW-0963">Cytoplasm</keyword>
<keyword id="KW-0343">GTPase activation</keyword>
<keyword id="KW-0597">Phosphoprotein</keyword>
<keyword id="KW-1267">Proteomics identification</keyword>
<keyword id="KW-1185">Reference proteome</keyword>
<keyword id="KW-0728">SH3 domain</keyword>
<protein>
    <recommendedName>
        <fullName evidence="8">Rho GTPase-activating protein 4</fullName>
    </recommendedName>
    <alternativeName>
        <fullName>Rho-GAP hematopoietic protein C1</fullName>
    </alternativeName>
    <alternativeName>
        <fullName>Rho-type GTPase-activating protein 4</fullName>
    </alternativeName>
    <alternativeName>
        <fullName>p115</fullName>
    </alternativeName>
</protein>
<dbReference type="EMBL" id="X78817">
    <property type="protein sequence ID" value="CAA55394.1"/>
    <property type="molecule type" value="mRNA"/>
</dbReference>
<dbReference type="EMBL" id="U52112">
    <property type="status" value="NOT_ANNOTATED_CDS"/>
    <property type="molecule type" value="Genomic_DNA"/>
</dbReference>
<dbReference type="EMBL" id="CH471172">
    <property type="protein sequence ID" value="EAW72778.1"/>
    <property type="molecule type" value="Genomic_DNA"/>
</dbReference>
<dbReference type="EMBL" id="BC052303">
    <property type="protein sequence ID" value="AAH52303.1"/>
    <property type="molecule type" value="mRNA"/>
</dbReference>
<dbReference type="EMBL" id="D50921">
    <property type="protein sequence ID" value="BAA09480.1"/>
    <property type="molecule type" value="mRNA"/>
</dbReference>
<dbReference type="CCDS" id="CCDS14736.1">
    <molecule id="P98171-1"/>
</dbReference>
<dbReference type="CCDS" id="CCDS55540.1">
    <molecule id="P98171-2"/>
</dbReference>
<dbReference type="PIR" id="I38100">
    <property type="entry name" value="I38100"/>
</dbReference>
<dbReference type="RefSeq" id="NP_001158213.1">
    <molecule id="P98171-2"/>
    <property type="nucleotide sequence ID" value="NM_001164741.2"/>
</dbReference>
<dbReference type="RefSeq" id="NP_001657.3">
    <molecule id="P98171-1"/>
    <property type="nucleotide sequence ID" value="NM_001666.4"/>
</dbReference>
<dbReference type="PDB" id="2EPD">
    <property type="method" value="NMR"/>
    <property type="chains" value="A=746-814"/>
</dbReference>
<dbReference type="PDBsum" id="2EPD"/>
<dbReference type="BMRB" id="P98171"/>
<dbReference type="SMR" id="P98171"/>
<dbReference type="BioGRID" id="106886">
    <property type="interactions" value="32"/>
</dbReference>
<dbReference type="DIP" id="DIP-41592N"/>
<dbReference type="FunCoup" id="P98171">
    <property type="interactions" value="949"/>
</dbReference>
<dbReference type="IntAct" id="P98171">
    <property type="interactions" value="13"/>
</dbReference>
<dbReference type="MINT" id="P98171"/>
<dbReference type="STRING" id="9606.ENSP00000359045"/>
<dbReference type="GlyCosmos" id="P98171">
    <property type="glycosylation" value="6 sites, 2 glycans"/>
</dbReference>
<dbReference type="GlyGen" id="P98171">
    <property type="glycosylation" value="8 sites, 2 O-linked glycans (8 sites)"/>
</dbReference>
<dbReference type="iPTMnet" id="P98171"/>
<dbReference type="PhosphoSitePlus" id="P98171"/>
<dbReference type="BioMuta" id="ARHGAP4"/>
<dbReference type="jPOST" id="P98171"/>
<dbReference type="MassIVE" id="P98171"/>
<dbReference type="PaxDb" id="9606-ENSP00000359045"/>
<dbReference type="PeptideAtlas" id="P98171"/>
<dbReference type="ProteomicsDB" id="57804">
    <molecule id="P98171-1"/>
</dbReference>
<dbReference type="ProteomicsDB" id="57805">
    <molecule id="P98171-2"/>
</dbReference>
<dbReference type="Pumba" id="P98171"/>
<dbReference type="Antibodypedia" id="360">
    <property type="antibodies" value="135 antibodies from 30 providers"/>
</dbReference>
<dbReference type="DNASU" id="393"/>
<dbReference type="Ensembl" id="ENST00000350060.10">
    <molecule id="P98171-1"/>
    <property type="protein sequence ID" value="ENSP00000203786.8"/>
    <property type="gene ID" value="ENSG00000089820.17"/>
</dbReference>
<dbReference type="Ensembl" id="ENST00000370028.7">
    <molecule id="P98171-2"/>
    <property type="protein sequence ID" value="ENSP00000359045.3"/>
    <property type="gene ID" value="ENSG00000089820.17"/>
</dbReference>
<dbReference type="GeneID" id="393"/>
<dbReference type="KEGG" id="hsa:393"/>
<dbReference type="MANE-Select" id="ENST00000350060.10">
    <property type="protein sequence ID" value="ENSP00000203786.8"/>
    <property type="RefSeq nucleotide sequence ID" value="NM_001666.5"/>
    <property type="RefSeq protein sequence ID" value="NP_001657.3"/>
</dbReference>
<dbReference type="UCSC" id="uc004fjk.3">
    <molecule id="P98171-1"/>
    <property type="organism name" value="human"/>
</dbReference>
<dbReference type="AGR" id="HGNC:674"/>
<dbReference type="CTD" id="393"/>
<dbReference type="DisGeNET" id="393"/>
<dbReference type="GeneCards" id="ARHGAP4"/>
<dbReference type="HGNC" id="HGNC:674">
    <property type="gene designation" value="ARHGAP4"/>
</dbReference>
<dbReference type="HPA" id="ENSG00000089820">
    <property type="expression patterns" value="Tissue enhanced (bone marrow, lymphoid tissue)"/>
</dbReference>
<dbReference type="MalaCards" id="ARHGAP4"/>
<dbReference type="MIM" id="300023">
    <property type="type" value="gene"/>
</dbReference>
<dbReference type="neXtProt" id="NX_P98171"/>
<dbReference type="OpenTargets" id="ENSG00000089820"/>
<dbReference type="PharmGKB" id="PA24958"/>
<dbReference type="VEuPathDB" id="HostDB:ENSG00000089820"/>
<dbReference type="eggNOG" id="KOG3565">
    <property type="taxonomic scope" value="Eukaryota"/>
</dbReference>
<dbReference type="GeneTree" id="ENSGT00950000182824"/>
<dbReference type="HOGENOM" id="CLU_005715_1_1_1"/>
<dbReference type="InParanoid" id="P98171"/>
<dbReference type="OMA" id="ECAGARG"/>
<dbReference type="OrthoDB" id="5981864at2759"/>
<dbReference type="PAN-GO" id="P98171">
    <property type="GO annotations" value="2 GO annotations based on evolutionary models"/>
</dbReference>
<dbReference type="PhylomeDB" id="P98171"/>
<dbReference type="TreeFam" id="TF315892"/>
<dbReference type="PathwayCommons" id="P98171"/>
<dbReference type="Reactome" id="R-HSA-8980692">
    <property type="pathway name" value="RHOA GTPase cycle"/>
</dbReference>
<dbReference type="Reactome" id="R-HSA-9013148">
    <property type="pathway name" value="CDC42 GTPase cycle"/>
</dbReference>
<dbReference type="Reactome" id="R-HSA-9013149">
    <property type="pathway name" value="RAC1 GTPase cycle"/>
</dbReference>
<dbReference type="SignaLink" id="P98171"/>
<dbReference type="SIGNOR" id="P98171"/>
<dbReference type="BioGRID-ORCS" id="393">
    <property type="hits" value="10 hits in 771 CRISPR screens"/>
</dbReference>
<dbReference type="ChiTaRS" id="ARHGAP4">
    <property type="organism name" value="human"/>
</dbReference>
<dbReference type="EvolutionaryTrace" id="P98171"/>
<dbReference type="GeneWiki" id="ARHGAP4"/>
<dbReference type="GenomeRNAi" id="393"/>
<dbReference type="Pharos" id="P98171">
    <property type="development level" value="Tbio"/>
</dbReference>
<dbReference type="PRO" id="PR:P98171"/>
<dbReference type="Proteomes" id="UP000005640">
    <property type="component" value="Chromosome X"/>
</dbReference>
<dbReference type="RNAct" id="P98171">
    <property type="molecule type" value="protein"/>
</dbReference>
<dbReference type="Bgee" id="ENSG00000089820">
    <property type="expression patterns" value="Expressed in granulocyte and 160 other cell types or tissues"/>
</dbReference>
<dbReference type="ExpressionAtlas" id="P98171">
    <property type="expression patterns" value="baseline and differential"/>
</dbReference>
<dbReference type="GO" id="GO:0005737">
    <property type="term" value="C:cytoplasm"/>
    <property type="evidence" value="ECO:0000314"/>
    <property type="project" value="LIFEdb"/>
</dbReference>
<dbReference type="GO" id="GO:0005829">
    <property type="term" value="C:cytosol"/>
    <property type="evidence" value="ECO:0000314"/>
    <property type="project" value="HPA"/>
</dbReference>
<dbReference type="GO" id="GO:0030426">
    <property type="term" value="C:growth cone"/>
    <property type="evidence" value="ECO:0007669"/>
    <property type="project" value="Ensembl"/>
</dbReference>
<dbReference type="GO" id="GO:0005874">
    <property type="term" value="C:microtubule"/>
    <property type="evidence" value="ECO:0007669"/>
    <property type="project" value="Ensembl"/>
</dbReference>
<dbReference type="GO" id="GO:0005654">
    <property type="term" value="C:nucleoplasm"/>
    <property type="evidence" value="ECO:0000314"/>
    <property type="project" value="HPA"/>
</dbReference>
<dbReference type="GO" id="GO:0005096">
    <property type="term" value="F:GTPase activator activity"/>
    <property type="evidence" value="ECO:0000304"/>
    <property type="project" value="Reactome"/>
</dbReference>
<dbReference type="GO" id="GO:0042802">
    <property type="term" value="F:identical protein binding"/>
    <property type="evidence" value="ECO:0000353"/>
    <property type="project" value="IntAct"/>
</dbReference>
<dbReference type="GO" id="GO:0007010">
    <property type="term" value="P:cytoskeleton organization"/>
    <property type="evidence" value="ECO:0000304"/>
    <property type="project" value="ProtInc"/>
</dbReference>
<dbReference type="GO" id="GO:0030517">
    <property type="term" value="P:negative regulation of axon extension"/>
    <property type="evidence" value="ECO:0007669"/>
    <property type="project" value="Ensembl"/>
</dbReference>
<dbReference type="GO" id="GO:0030336">
    <property type="term" value="P:negative regulation of cell migration"/>
    <property type="evidence" value="ECO:0000318"/>
    <property type="project" value="GO_Central"/>
</dbReference>
<dbReference type="GO" id="GO:0010764">
    <property type="term" value="P:negative regulation of fibroblast migration"/>
    <property type="evidence" value="ECO:0007669"/>
    <property type="project" value="Ensembl"/>
</dbReference>
<dbReference type="GO" id="GO:0007399">
    <property type="term" value="P:nervous system development"/>
    <property type="evidence" value="ECO:0007669"/>
    <property type="project" value="Ensembl"/>
</dbReference>
<dbReference type="GO" id="GO:0051056">
    <property type="term" value="P:regulation of small GTPase mediated signal transduction"/>
    <property type="evidence" value="ECO:0000304"/>
    <property type="project" value="Reactome"/>
</dbReference>
<dbReference type="GO" id="GO:0007266">
    <property type="term" value="P:Rho protein signal transduction"/>
    <property type="evidence" value="ECO:0000304"/>
    <property type="project" value="ProtInc"/>
</dbReference>
<dbReference type="CDD" id="cd07656">
    <property type="entry name" value="F-BAR_srGAP"/>
    <property type="match status" value="1"/>
</dbReference>
<dbReference type="CDD" id="cd11956">
    <property type="entry name" value="SH3_srGAP4"/>
    <property type="match status" value="1"/>
</dbReference>
<dbReference type="FunFam" id="1.10.555.10:FF:000026">
    <property type="entry name" value="Rho GTPase activating protein 4"/>
    <property type="match status" value="1"/>
</dbReference>
<dbReference type="FunFam" id="2.30.30.40:FF:000404">
    <property type="entry name" value="Rho GTPase-activating protein 4"/>
    <property type="match status" value="1"/>
</dbReference>
<dbReference type="Gene3D" id="1.20.1270.60">
    <property type="entry name" value="Arfaptin homology (AH) domain/BAR domain"/>
    <property type="match status" value="1"/>
</dbReference>
<dbReference type="Gene3D" id="1.10.555.10">
    <property type="entry name" value="Rho GTPase activation protein"/>
    <property type="match status" value="1"/>
</dbReference>
<dbReference type="Gene3D" id="2.30.30.40">
    <property type="entry name" value="SH3 Domains"/>
    <property type="match status" value="1"/>
</dbReference>
<dbReference type="InterPro" id="IPR027267">
    <property type="entry name" value="AH/BAR_dom_sf"/>
</dbReference>
<dbReference type="InterPro" id="IPR031160">
    <property type="entry name" value="F_BAR"/>
</dbReference>
<dbReference type="InterPro" id="IPR001060">
    <property type="entry name" value="FCH_dom"/>
</dbReference>
<dbReference type="InterPro" id="IPR008936">
    <property type="entry name" value="Rho_GTPase_activation_prot"/>
</dbReference>
<dbReference type="InterPro" id="IPR000198">
    <property type="entry name" value="RhoGAP_dom"/>
</dbReference>
<dbReference type="InterPro" id="IPR036028">
    <property type="entry name" value="SH3-like_dom_sf"/>
</dbReference>
<dbReference type="InterPro" id="IPR001452">
    <property type="entry name" value="SH3_domain"/>
</dbReference>
<dbReference type="InterPro" id="IPR051627">
    <property type="entry name" value="SLIT-ROBO_RhoGAP"/>
</dbReference>
<dbReference type="InterPro" id="IPR035678">
    <property type="entry name" value="srGAP4_SH3"/>
</dbReference>
<dbReference type="PANTHER" id="PTHR14166">
    <property type="entry name" value="SLIT-ROBO RHO GTPASE ACTIVATING PROTEIN"/>
    <property type="match status" value="1"/>
</dbReference>
<dbReference type="Pfam" id="PF00611">
    <property type="entry name" value="FCH"/>
    <property type="match status" value="1"/>
</dbReference>
<dbReference type="Pfam" id="PF00620">
    <property type="entry name" value="RhoGAP"/>
    <property type="match status" value="1"/>
</dbReference>
<dbReference type="Pfam" id="PF14604">
    <property type="entry name" value="SH3_9"/>
    <property type="match status" value="1"/>
</dbReference>
<dbReference type="SMART" id="SM00055">
    <property type="entry name" value="FCH"/>
    <property type="match status" value="1"/>
</dbReference>
<dbReference type="SMART" id="SM00324">
    <property type="entry name" value="RhoGAP"/>
    <property type="match status" value="1"/>
</dbReference>
<dbReference type="SMART" id="SM00326">
    <property type="entry name" value="SH3"/>
    <property type="match status" value="1"/>
</dbReference>
<dbReference type="SUPFAM" id="SSF103657">
    <property type="entry name" value="BAR/IMD domain-like"/>
    <property type="match status" value="1"/>
</dbReference>
<dbReference type="SUPFAM" id="SSF48350">
    <property type="entry name" value="GTPase activation domain, GAP"/>
    <property type="match status" value="1"/>
</dbReference>
<dbReference type="SUPFAM" id="SSF50044">
    <property type="entry name" value="SH3-domain"/>
    <property type="match status" value="1"/>
</dbReference>
<dbReference type="PROSITE" id="PS51741">
    <property type="entry name" value="F_BAR"/>
    <property type="match status" value="1"/>
</dbReference>
<dbReference type="PROSITE" id="PS50238">
    <property type="entry name" value="RHOGAP"/>
    <property type="match status" value="1"/>
</dbReference>
<dbReference type="PROSITE" id="PS50002">
    <property type="entry name" value="SH3"/>
    <property type="match status" value="1"/>
</dbReference>
<comment type="function">
    <text>Inhibitory effect on stress fiber organization. May down-regulate Rho-like GTPase in hematopoietic cells.</text>
</comment>
<comment type="subunit">
    <text evidence="6">Interacts with NCKAP1L.</text>
</comment>
<comment type="interaction">
    <interactant intactId="EBI-16177615">
        <id>P98171-1</id>
    </interactant>
    <interactant intactId="EBI-16177615">
        <id>P98171-1</id>
        <label>ARHGAP4</label>
    </interactant>
    <organismsDiffer>false</organismsDiffer>
    <experiments>3</experiments>
</comment>
<comment type="subcellular location">
    <subcellularLocation>
        <location>Cytoplasm</location>
    </subcellularLocation>
    <text>Just below the plasma membrane.</text>
</comment>
<comment type="alternative products">
    <event type="alternative splicing"/>
    <isoform>
        <id>P98171-1</id>
        <name>1</name>
        <sequence type="displayed"/>
    </isoform>
    <isoform>
        <id>P98171-2</id>
        <name>2</name>
        <sequence type="described" ref="VSP_042902"/>
    </isoform>
</comment>
<comment type="tissue specificity">
    <text>Predominantly in hematopoietic cells (spleen, thymus and leukocytes); low levels in placenta, lung and various fetal tissues.</text>
</comment>
<organism>
    <name type="scientific">Homo sapiens</name>
    <name type="common">Human</name>
    <dbReference type="NCBI Taxonomy" id="9606"/>
    <lineage>
        <taxon>Eukaryota</taxon>
        <taxon>Metazoa</taxon>
        <taxon>Chordata</taxon>
        <taxon>Craniata</taxon>
        <taxon>Vertebrata</taxon>
        <taxon>Euteleostomi</taxon>
        <taxon>Mammalia</taxon>
        <taxon>Eutheria</taxon>
        <taxon>Euarchontoglires</taxon>
        <taxon>Primates</taxon>
        <taxon>Haplorrhini</taxon>
        <taxon>Catarrhini</taxon>
        <taxon>Hominidae</taxon>
        <taxon>Homo</taxon>
    </lineage>
</organism>
<feature type="chain" id="PRO_0000056701" description="Rho GTPase-activating protein 4">
    <location>
        <begin position="1"/>
        <end position="946"/>
    </location>
</feature>
<feature type="domain" description="F-BAR" evidence="4">
    <location>
        <begin position="19"/>
        <end position="317"/>
    </location>
</feature>
<feature type="domain" description="Rho-GAP" evidence="2">
    <location>
        <begin position="507"/>
        <end position="695"/>
    </location>
</feature>
<feature type="domain" description="SH3" evidence="3">
    <location>
        <begin position="746"/>
        <end position="805"/>
    </location>
</feature>
<feature type="region of interest" description="Disordered" evidence="5">
    <location>
        <begin position="187"/>
        <end position="220"/>
    </location>
</feature>
<feature type="region of interest" description="Disordered" evidence="5">
    <location>
        <begin position="402"/>
        <end position="435"/>
    </location>
</feature>
<feature type="region of interest" description="Disordered" evidence="5">
    <location>
        <begin position="885"/>
        <end position="946"/>
    </location>
</feature>
<feature type="coiled-coil region" evidence="1">
    <location>
        <begin position="128"/>
        <end position="195"/>
    </location>
</feature>
<feature type="compositionally biased region" description="Basic and acidic residues" evidence="5">
    <location>
        <begin position="187"/>
        <end position="196"/>
    </location>
</feature>
<feature type="compositionally biased region" description="Low complexity" evidence="5">
    <location>
        <begin position="202"/>
        <end position="211"/>
    </location>
</feature>
<feature type="compositionally biased region" description="Low complexity" evidence="5">
    <location>
        <begin position="407"/>
        <end position="419"/>
    </location>
</feature>
<feature type="compositionally biased region" description="Pro residues" evidence="5">
    <location>
        <begin position="901"/>
        <end position="910"/>
    </location>
</feature>
<feature type="compositionally biased region" description="Low complexity" evidence="5">
    <location>
        <begin position="924"/>
        <end position="934"/>
    </location>
</feature>
<feature type="site" description="Arginine finger; crucial for GTP hydrolysis by stabilizing the transition state" evidence="2">
    <location>
        <position position="543"/>
    </location>
</feature>
<feature type="modified residue" description="Phosphoserine" evidence="10">
    <location>
        <position position="860"/>
    </location>
</feature>
<feature type="modified residue" description="Phosphoserine" evidence="10">
    <location>
        <position position="901"/>
    </location>
</feature>
<feature type="modified residue" description="Phosphoserine" evidence="10">
    <location>
        <position position="906"/>
    </location>
</feature>
<feature type="splice variant" id="VSP_042902" description="In isoform 2." evidence="7">
    <original>K</original>
    <variation>KLWPPQRPVAASSCAPVCWLQAGFLVHPPWWGAMCAPSTHQ</variation>
    <location>
        <position position="227"/>
    </location>
</feature>
<feature type="sequence variant" id="VAR_028413" description="In dbSNP:rs5987182.">
    <original>A</original>
    <variation>V</variation>
    <location>
        <position position="104"/>
    </location>
</feature>
<feature type="sequence conflict" description="In Ref. 1; CAA55394." evidence="8" ref="1">
    <original>A</original>
    <variation>D</variation>
    <location>
        <position position="609"/>
    </location>
</feature>
<feature type="sequence conflict" description="In Ref. 1; CAA55394." evidence="8" ref="1">
    <original>E</original>
    <variation>D</variation>
    <location>
        <position position="731"/>
    </location>
</feature>
<feature type="strand" evidence="11">
    <location>
        <begin position="749"/>
        <end position="755"/>
    </location>
</feature>
<feature type="strand" evidence="11">
    <location>
        <begin position="772"/>
        <end position="780"/>
    </location>
</feature>
<feature type="strand" evidence="11">
    <location>
        <begin position="783"/>
        <end position="788"/>
    </location>
</feature>
<feature type="strand" evidence="11">
    <location>
        <begin position="791"/>
        <end position="801"/>
    </location>
</feature>
<reference key="1">
    <citation type="journal article" date="1996" name="Proc. Natl. Acad. Sci. U.S.A.">
        <title>An X chromosome-linked gene encoding a protein with characteristics of a rhoGAP predominantly expressed in hematopoietic cells.</title>
        <authorList>
            <person name="Tribioli C."/>
            <person name="Droetto S."/>
            <person name="Bione S."/>
            <person name="Cesareni G."/>
            <person name="Torrisi M.R."/>
            <person name="Lotti L.V."/>
            <person name="Lanfrancone L."/>
            <person name="Toniolo D."/>
            <person name="Pelicci P.-G."/>
        </authorList>
    </citation>
    <scope>NUCLEOTIDE SEQUENCE [MRNA] (ISOFORM 1)</scope>
    <source>
        <tissue>Embryo</tissue>
    </source>
</reference>
<reference key="2">
    <citation type="journal article" date="2005" name="Nature">
        <title>The DNA sequence of the human X chromosome.</title>
        <authorList>
            <person name="Ross M.T."/>
            <person name="Grafham D.V."/>
            <person name="Coffey A.J."/>
            <person name="Scherer S."/>
            <person name="McLay K."/>
            <person name="Muzny D."/>
            <person name="Platzer M."/>
            <person name="Howell G.R."/>
            <person name="Burrows C."/>
            <person name="Bird C.P."/>
            <person name="Frankish A."/>
            <person name="Lovell F.L."/>
            <person name="Howe K.L."/>
            <person name="Ashurst J.L."/>
            <person name="Fulton R.S."/>
            <person name="Sudbrak R."/>
            <person name="Wen G."/>
            <person name="Jones M.C."/>
            <person name="Hurles M.E."/>
            <person name="Andrews T.D."/>
            <person name="Scott C.E."/>
            <person name="Searle S."/>
            <person name="Ramser J."/>
            <person name="Whittaker A."/>
            <person name="Deadman R."/>
            <person name="Carter N.P."/>
            <person name="Hunt S.E."/>
            <person name="Chen R."/>
            <person name="Cree A."/>
            <person name="Gunaratne P."/>
            <person name="Havlak P."/>
            <person name="Hodgson A."/>
            <person name="Metzker M.L."/>
            <person name="Richards S."/>
            <person name="Scott G."/>
            <person name="Steffen D."/>
            <person name="Sodergren E."/>
            <person name="Wheeler D.A."/>
            <person name="Worley K.C."/>
            <person name="Ainscough R."/>
            <person name="Ambrose K.D."/>
            <person name="Ansari-Lari M.A."/>
            <person name="Aradhya S."/>
            <person name="Ashwell R.I."/>
            <person name="Babbage A.K."/>
            <person name="Bagguley C.L."/>
            <person name="Ballabio A."/>
            <person name="Banerjee R."/>
            <person name="Barker G.E."/>
            <person name="Barlow K.F."/>
            <person name="Barrett I.P."/>
            <person name="Bates K.N."/>
            <person name="Beare D.M."/>
            <person name="Beasley H."/>
            <person name="Beasley O."/>
            <person name="Beck A."/>
            <person name="Bethel G."/>
            <person name="Blechschmidt K."/>
            <person name="Brady N."/>
            <person name="Bray-Allen S."/>
            <person name="Bridgeman A.M."/>
            <person name="Brown A.J."/>
            <person name="Brown M.J."/>
            <person name="Bonnin D."/>
            <person name="Bruford E.A."/>
            <person name="Buhay C."/>
            <person name="Burch P."/>
            <person name="Burford D."/>
            <person name="Burgess J."/>
            <person name="Burrill W."/>
            <person name="Burton J."/>
            <person name="Bye J.M."/>
            <person name="Carder C."/>
            <person name="Carrel L."/>
            <person name="Chako J."/>
            <person name="Chapman J.C."/>
            <person name="Chavez D."/>
            <person name="Chen E."/>
            <person name="Chen G."/>
            <person name="Chen Y."/>
            <person name="Chen Z."/>
            <person name="Chinault C."/>
            <person name="Ciccodicola A."/>
            <person name="Clark S.Y."/>
            <person name="Clarke G."/>
            <person name="Clee C.M."/>
            <person name="Clegg S."/>
            <person name="Clerc-Blankenburg K."/>
            <person name="Clifford K."/>
            <person name="Cobley V."/>
            <person name="Cole C.G."/>
            <person name="Conquer J.S."/>
            <person name="Corby N."/>
            <person name="Connor R.E."/>
            <person name="David R."/>
            <person name="Davies J."/>
            <person name="Davis C."/>
            <person name="Davis J."/>
            <person name="Delgado O."/>
            <person name="Deshazo D."/>
            <person name="Dhami P."/>
            <person name="Ding Y."/>
            <person name="Dinh H."/>
            <person name="Dodsworth S."/>
            <person name="Draper H."/>
            <person name="Dugan-Rocha S."/>
            <person name="Dunham A."/>
            <person name="Dunn M."/>
            <person name="Durbin K.J."/>
            <person name="Dutta I."/>
            <person name="Eades T."/>
            <person name="Ellwood M."/>
            <person name="Emery-Cohen A."/>
            <person name="Errington H."/>
            <person name="Evans K.L."/>
            <person name="Faulkner L."/>
            <person name="Francis F."/>
            <person name="Frankland J."/>
            <person name="Fraser A.E."/>
            <person name="Galgoczy P."/>
            <person name="Gilbert J."/>
            <person name="Gill R."/>
            <person name="Gloeckner G."/>
            <person name="Gregory S.G."/>
            <person name="Gribble S."/>
            <person name="Griffiths C."/>
            <person name="Grocock R."/>
            <person name="Gu Y."/>
            <person name="Gwilliam R."/>
            <person name="Hamilton C."/>
            <person name="Hart E.A."/>
            <person name="Hawes A."/>
            <person name="Heath P.D."/>
            <person name="Heitmann K."/>
            <person name="Hennig S."/>
            <person name="Hernandez J."/>
            <person name="Hinzmann B."/>
            <person name="Ho S."/>
            <person name="Hoffs M."/>
            <person name="Howden P.J."/>
            <person name="Huckle E.J."/>
            <person name="Hume J."/>
            <person name="Hunt P.J."/>
            <person name="Hunt A.R."/>
            <person name="Isherwood J."/>
            <person name="Jacob L."/>
            <person name="Johnson D."/>
            <person name="Jones S."/>
            <person name="de Jong P.J."/>
            <person name="Joseph S.S."/>
            <person name="Keenan S."/>
            <person name="Kelly S."/>
            <person name="Kershaw J.K."/>
            <person name="Khan Z."/>
            <person name="Kioschis P."/>
            <person name="Klages S."/>
            <person name="Knights A.J."/>
            <person name="Kosiura A."/>
            <person name="Kovar-Smith C."/>
            <person name="Laird G.K."/>
            <person name="Langford C."/>
            <person name="Lawlor S."/>
            <person name="Leversha M."/>
            <person name="Lewis L."/>
            <person name="Liu W."/>
            <person name="Lloyd C."/>
            <person name="Lloyd D.M."/>
            <person name="Loulseged H."/>
            <person name="Loveland J.E."/>
            <person name="Lovell J.D."/>
            <person name="Lozado R."/>
            <person name="Lu J."/>
            <person name="Lyne R."/>
            <person name="Ma J."/>
            <person name="Maheshwari M."/>
            <person name="Matthews L.H."/>
            <person name="McDowall J."/>
            <person name="McLaren S."/>
            <person name="McMurray A."/>
            <person name="Meidl P."/>
            <person name="Meitinger T."/>
            <person name="Milne S."/>
            <person name="Miner G."/>
            <person name="Mistry S.L."/>
            <person name="Morgan M."/>
            <person name="Morris S."/>
            <person name="Mueller I."/>
            <person name="Mullikin J.C."/>
            <person name="Nguyen N."/>
            <person name="Nordsiek G."/>
            <person name="Nyakatura G."/>
            <person name="O'dell C.N."/>
            <person name="Okwuonu G."/>
            <person name="Palmer S."/>
            <person name="Pandian R."/>
            <person name="Parker D."/>
            <person name="Parrish J."/>
            <person name="Pasternak S."/>
            <person name="Patel D."/>
            <person name="Pearce A.V."/>
            <person name="Pearson D.M."/>
            <person name="Pelan S.E."/>
            <person name="Perez L."/>
            <person name="Porter K.M."/>
            <person name="Ramsey Y."/>
            <person name="Reichwald K."/>
            <person name="Rhodes S."/>
            <person name="Ridler K.A."/>
            <person name="Schlessinger D."/>
            <person name="Schueler M.G."/>
            <person name="Sehra H.K."/>
            <person name="Shaw-Smith C."/>
            <person name="Shen H."/>
            <person name="Sheridan E.M."/>
            <person name="Shownkeen R."/>
            <person name="Skuce C.D."/>
            <person name="Smith M.L."/>
            <person name="Sotheran E.C."/>
            <person name="Steingruber H.E."/>
            <person name="Steward C.A."/>
            <person name="Storey R."/>
            <person name="Swann R.M."/>
            <person name="Swarbreck D."/>
            <person name="Tabor P.E."/>
            <person name="Taudien S."/>
            <person name="Taylor T."/>
            <person name="Teague B."/>
            <person name="Thomas K."/>
            <person name="Thorpe A."/>
            <person name="Timms K."/>
            <person name="Tracey A."/>
            <person name="Trevanion S."/>
            <person name="Tromans A.C."/>
            <person name="d'Urso M."/>
            <person name="Verduzco D."/>
            <person name="Villasana D."/>
            <person name="Waldron L."/>
            <person name="Wall M."/>
            <person name="Wang Q."/>
            <person name="Warren J."/>
            <person name="Warry G.L."/>
            <person name="Wei X."/>
            <person name="West A."/>
            <person name="Whitehead S.L."/>
            <person name="Whiteley M.N."/>
            <person name="Wilkinson J.E."/>
            <person name="Willey D.L."/>
            <person name="Williams G."/>
            <person name="Williams L."/>
            <person name="Williamson A."/>
            <person name="Williamson H."/>
            <person name="Wilming L."/>
            <person name="Woodmansey R.L."/>
            <person name="Wray P.W."/>
            <person name="Yen J."/>
            <person name="Zhang J."/>
            <person name="Zhou J."/>
            <person name="Zoghbi H."/>
            <person name="Zorilla S."/>
            <person name="Buck D."/>
            <person name="Reinhardt R."/>
            <person name="Poustka A."/>
            <person name="Rosenthal A."/>
            <person name="Lehrach H."/>
            <person name="Meindl A."/>
            <person name="Minx P.J."/>
            <person name="Hillier L.W."/>
            <person name="Willard H.F."/>
            <person name="Wilson R.K."/>
            <person name="Waterston R.H."/>
            <person name="Rice C.M."/>
            <person name="Vaudin M."/>
            <person name="Coulson A."/>
            <person name="Nelson D.L."/>
            <person name="Weinstock G."/>
            <person name="Sulston J.E."/>
            <person name="Durbin R.M."/>
            <person name="Hubbard T."/>
            <person name="Gibbs R.A."/>
            <person name="Beck S."/>
            <person name="Rogers J."/>
            <person name="Bentley D.R."/>
        </authorList>
    </citation>
    <scope>NUCLEOTIDE SEQUENCE [LARGE SCALE GENOMIC DNA]</scope>
</reference>
<reference key="3">
    <citation type="submission" date="2005-09" db="EMBL/GenBank/DDBJ databases">
        <authorList>
            <person name="Mural R.J."/>
            <person name="Istrail S."/>
            <person name="Sutton G."/>
            <person name="Florea L."/>
            <person name="Halpern A.L."/>
            <person name="Mobarry C.M."/>
            <person name="Lippert R."/>
            <person name="Walenz B."/>
            <person name="Shatkay H."/>
            <person name="Dew I."/>
            <person name="Miller J.R."/>
            <person name="Flanigan M.J."/>
            <person name="Edwards N.J."/>
            <person name="Bolanos R."/>
            <person name="Fasulo D."/>
            <person name="Halldorsson B.V."/>
            <person name="Hannenhalli S."/>
            <person name="Turner R."/>
            <person name="Yooseph S."/>
            <person name="Lu F."/>
            <person name="Nusskern D.R."/>
            <person name="Shue B.C."/>
            <person name="Zheng X.H."/>
            <person name="Zhong F."/>
            <person name="Delcher A.L."/>
            <person name="Huson D.H."/>
            <person name="Kravitz S.A."/>
            <person name="Mouchard L."/>
            <person name="Reinert K."/>
            <person name="Remington K.A."/>
            <person name="Clark A.G."/>
            <person name="Waterman M.S."/>
            <person name="Eichler E.E."/>
            <person name="Adams M.D."/>
            <person name="Hunkapiller M.W."/>
            <person name="Myers E.W."/>
            <person name="Venter J.C."/>
        </authorList>
    </citation>
    <scope>NUCLEOTIDE SEQUENCE [LARGE SCALE GENOMIC DNA]</scope>
</reference>
<reference key="4">
    <citation type="journal article" date="2004" name="Genome Res.">
        <title>The status, quality, and expansion of the NIH full-length cDNA project: the Mammalian Gene Collection (MGC).</title>
        <authorList>
            <consortium name="The MGC Project Team"/>
        </authorList>
    </citation>
    <scope>NUCLEOTIDE SEQUENCE [LARGE SCALE MRNA] (ISOFORM 2)</scope>
    <source>
        <tissue>Pancreas</tissue>
    </source>
</reference>
<reference key="5">
    <citation type="journal article" date="1995" name="DNA Res.">
        <title>Prediction of the coding sequences of unidentified human genes. IV. The coding sequences of 40 new genes (KIAA0121-KIAA0160) deduced by analysis of cDNA clones from human cell line KG-1.</title>
        <authorList>
            <person name="Nagase T."/>
            <person name="Seki N."/>
            <person name="Tanaka A."/>
            <person name="Ishikawa K."/>
            <person name="Nomura N."/>
        </authorList>
    </citation>
    <scope>NUCLEOTIDE SEQUENCE [LARGE SCALE MRNA] OF 5-946 (ISOFORM 1)</scope>
    <source>
        <tissue>Bone marrow</tissue>
    </source>
</reference>
<reference key="6">
    <citation type="journal article" date="1994" name="Hum. Mol. Genet.">
        <title>Isolation of new genes in distal Xq28: transcriptional map and identification of a human homologue of the ARD1 N-acetyl transferase of Saccharomyces cerevisiae.</title>
        <authorList>
            <person name="Tribioli C."/>
            <person name="Mancini M."/>
            <person name="Plassart E."/>
            <person name="Bione S."/>
            <person name="Rivella S."/>
            <person name="Sala C."/>
            <person name="Torri G."/>
            <person name="Toniolo D."/>
        </authorList>
    </citation>
    <scope>NUCLEOTIDE SEQUENCE [MRNA] OF 1-103 (ISOFORM 1)</scope>
    <source>
        <tissue>Embryo</tissue>
    </source>
</reference>
<reference key="7">
    <citation type="journal article" date="2006" name="PLoS Biol.">
        <title>Hem-1 complexes are essential for Rac activation, actin polymerization, and myosin regulation during neutrophil chemotaxis.</title>
        <authorList>
            <person name="Weiner O.D."/>
            <person name="Rentel M.C."/>
            <person name="Ott A."/>
            <person name="Brown G.E."/>
            <person name="Jedrychowski M."/>
            <person name="Yaffe M.B."/>
            <person name="Gygi S.P."/>
            <person name="Cantley L.C."/>
            <person name="Bourne H.R."/>
            <person name="Kirschner M.W."/>
        </authorList>
    </citation>
    <scope>INTERACTION WITH NCKAP1L</scope>
</reference>
<reference key="8">
    <citation type="journal article" date="2008" name="Proc. Natl. Acad. Sci. U.S.A.">
        <title>A quantitative atlas of mitotic phosphorylation.</title>
        <authorList>
            <person name="Dephoure N."/>
            <person name="Zhou C."/>
            <person name="Villen J."/>
            <person name="Beausoleil S.A."/>
            <person name="Bakalarski C.E."/>
            <person name="Elledge S.J."/>
            <person name="Gygi S.P."/>
        </authorList>
    </citation>
    <scope>IDENTIFICATION BY MASS SPECTROMETRY [LARGE SCALE ANALYSIS]</scope>
    <source>
        <tissue>Cervix carcinoma</tissue>
    </source>
</reference>
<reference key="9">
    <citation type="journal article" date="2009" name="Sci. Signal.">
        <title>Quantitative phosphoproteomic analysis of T cell receptor signaling reveals system-wide modulation of protein-protein interactions.</title>
        <authorList>
            <person name="Mayya V."/>
            <person name="Lundgren D.H."/>
            <person name="Hwang S.-I."/>
            <person name="Rezaul K."/>
            <person name="Wu L."/>
            <person name="Eng J.K."/>
            <person name="Rodionov V."/>
            <person name="Han D.K."/>
        </authorList>
    </citation>
    <scope>IDENTIFICATION BY MASS SPECTROMETRY [LARGE SCALE ANALYSIS]</scope>
    <source>
        <tissue>Leukemic T-cell</tissue>
    </source>
</reference>
<reference key="10">
    <citation type="journal article" date="2013" name="J. Proteome Res.">
        <title>Toward a comprehensive characterization of a human cancer cell phosphoproteome.</title>
        <authorList>
            <person name="Zhou H."/>
            <person name="Di Palma S."/>
            <person name="Preisinger C."/>
            <person name="Peng M."/>
            <person name="Polat A.N."/>
            <person name="Heck A.J."/>
            <person name="Mohammed S."/>
        </authorList>
    </citation>
    <scope>PHOSPHORYLATION [LARGE SCALE ANALYSIS] AT SER-860; SER-901 AND SER-906</scope>
    <scope>IDENTIFICATION BY MASS SPECTROMETRY [LARGE SCALE ANALYSIS]</scope>
    <source>
        <tissue>Erythroleukemia</tissue>
    </source>
</reference>
<reference key="11">
    <citation type="journal article" date="2014" name="J. Proteomics">
        <title>An enzyme assisted RP-RPLC approach for in-depth analysis of human liver phosphoproteome.</title>
        <authorList>
            <person name="Bian Y."/>
            <person name="Song C."/>
            <person name="Cheng K."/>
            <person name="Dong M."/>
            <person name="Wang F."/>
            <person name="Huang J."/>
            <person name="Sun D."/>
            <person name="Wang L."/>
            <person name="Ye M."/>
            <person name="Zou H."/>
        </authorList>
    </citation>
    <scope>IDENTIFICATION BY MASS SPECTROMETRY [LARGE SCALE ANALYSIS]</scope>
    <source>
        <tissue>Liver</tissue>
    </source>
</reference>
<reference key="12">
    <citation type="journal article" date="2015" name="Proteomics">
        <title>N-terminome analysis of the human mitochondrial proteome.</title>
        <authorList>
            <person name="Vaca Jacome A.S."/>
            <person name="Rabilloud T."/>
            <person name="Schaeffer-Reiss C."/>
            <person name="Rompais M."/>
            <person name="Ayoub D."/>
            <person name="Lane L."/>
            <person name="Bairoch A."/>
            <person name="Van Dorsselaer A."/>
            <person name="Carapito C."/>
        </authorList>
    </citation>
    <scope>IDENTIFICATION BY MASS SPECTROMETRY [LARGE SCALE ANALYSIS]</scope>
</reference>
<reference key="13">
    <citation type="submission" date="2007-10" db="PDB data bank">
        <title>Solution structure of SH3 domain in Rho-GTPase-activating protein 4.</title>
        <authorList>
            <consortium name="RIKEN structural genomics initiative (RSGI)"/>
        </authorList>
    </citation>
    <scope>STRUCTURE BY NMR OF 746-814</scope>
</reference>